<comment type="function">
    <text evidence="1">Removes the formyl group from the N-terminal Met of newly synthesized proteins. Requires at least a dipeptide for an efficient rate of reaction. N-terminal L-methionine is a prerequisite for activity but the enzyme has broad specificity at other positions.</text>
</comment>
<comment type="catalytic activity">
    <reaction evidence="1">
        <text>N-terminal N-formyl-L-methionyl-[peptide] + H2O = N-terminal L-methionyl-[peptide] + formate</text>
        <dbReference type="Rhea" id="RHEA:24420"/>
        <dbReference type="Rhea" id="RHEA-COMP:10639"/>
        <dbReference type="Rhea" id="RHEA-COMP:10640"/>
        <dbReference type="ChEBI" id="CHEBI:15377"/>
        <dbReference type="ChEBI" id="CHEBI:15740"/>
        <dbReference type="ChEBI" id="CHEBI:49298"/>
        <dbReference type="ChEBI" id="CHEBI:64731"/>
        <dbReference type="EC" id="3.5.1.88"/>
    </reaction>
</comment>
<comment type="cofactor">
    <cofactor evidence="1">
        <name>Fe(2+)</name>
        <dbReference type="ChEBI" id="CHEBI:29033"/>
    </cofactor>
    <text evidence="1">Binds 1 Fe(2+) ion.</text>
</comment>
<comment type="similarity">
    <text evidence="1">Belongs to the polypeptide deformylase family.</text>
</comment>
<gene>
    <name evidence="1" type="primary">def</name>
    <name type="ordered locus">SDY_3463</name>
</gene>
<proteinExistence type="inferred from homology"/>
<sequence length="169" mass="19328">MSVLQVLHIPDERLRKVAKPVEEVNAEIQRIVDDMFETMYAEEGIGLAATQVDIHQRIIVIDVSENRDERLVLINPELLEKSGETGIEEGCLSIPEQRALVPRAEKVKIRALDRDGKPFELEADGLLAICIQHEMDHLVGKLFMDYLSPLKQQRIRQKVEKLDRLKARA</sequence>
<dbReference type="EC" id="3.5.1.88" evidence="1"/>
<dbReference type="EMBL" id="CP000034">
    <property type="protein sequence ID" value="ABB63442.1"/>
    <property type="molecule type" value="Genomic_DNA"/>
</dbReference>
<dbReference type="RefSeq" id="WP_000114984.1">
    <property type="nucleotide sequence ID" value="NC_007606.1"/>
</dbReference>
<dbReference type="RefSeq" id="YP_404933.1">
    <property type="nucleotide sequence ID" value="NC_007606.1"/>
</dbReference>
<dbReference type="SMR" id="Q32B63"/>
<dbReference type="STRING" id="300267.SDY_3463"/>
<dbReference type="EnsemblBacteria" id="ABB63442">
    <property type="protein sequence ID" value="ABB63442"/>
    <property type="gene ID" value="SDY_3463"/>
</dbReference>
<dbReference type="GeneID" id="89518132"/>
<dbReference type="KEGG" id="sdy:SDY_3463"/>
<dbReference type="PATRIC" id="fig|300267.13.peg.4116"/>
<dbReference type="HOGENOM" id="CLU_061901_2_1_6"/>
<dbReference type="Proteomes" id="UP000002716">
    <property type="component" value="Chromosome"/>
</dbReference>
<dbReference type="GO" id="GO:0046872">
    <property type="term" value="F:metal ion binding"/>
    <property type="evidence" value="ECO:0007669"/>
    <property type="project" value="UniProtKB-KW"/>
</dbReference>
<dbReference type="GO" id="GO:0042586">
    <property type="term" value="F:peptide deformylase activity"/>
    <property type="evidence" value="ECO:0007669"/>
    <property type="project" value="UniProtKB-UniRule"/>
</dbReference>
<dbReference type="GO" id="GO:0043686">
    <property type="term" value="P:co-translational protein modification"/>
    <property type="evidence" value="ECO:0007669"/>
    <property type="project" value="TreeGrafter"/>
</dbReference>
<dbReference type="GO" id="GO:0006412">
    <property type="term" value="P:translation"/>
    <property type="evidence" value="ECO:0007669"/>
    <property type="project" value="UniProtKB-UniRule"/>
</dbReference>
<dbReference type="CDD" id="cd00487">
    <property type="entry name" value="Pep_deformylase"/>
    <property type="match status" value="1"/>
</dbReference>
<dbReference type="FunFam" id="3.90.45.10:FF:000001">
    <property type="entry name" value="Peptide deformylase"/>
    <property type="match status" value="1"/>
</dbReference>
<dbReference type="Gene3D" id="3.90.45.10">
    <property type="entry name" value="Peptide deformylase"/>
    <property type="match status" value="1"/>
</dbReference>
<dbReference type="HAMAP" id="MF_00163">
    <property type="entry name" value="Pep_deformylase"/>
    <property type="match status" value="1"/>
</dbReference>
<dbReference type="InterPro" id="IPR023635">
    <property type="entry name" value="Peptide_deformylase"/>
</dbReference>
<dbReference type="InterPro" id="IPR036821">
    <property type="entry name" value="Peptide_deformylase_sf"/>
</dbReference>
<dbReference type="NCBIfam" id="TIGR00079">
    <property type="entry name" value="pept_deformyl"/>
    <property type="match status" value="1"/>
</dbReference>
<dbReference type="NCBIfam" id="NF001159">
    <property type="entry name" value="PRK00150.1-3"/>
    <property type="match status" value="1"/>
</dbReference>
<dbReference type="PANTHER" id="PTHR10458">
    <property type="entry name" value="PEPTIDE DEFORMYLASE"/>
    <property type="match status" value="1"/>
</dbReference>
<dbReference type="PANTHER" id="PTHR10458:SF21">
    <property type="entry name" value="PEPTIDE DEFORMYLASE"/>
    <property type="match status" value="1"/>
</dbReference>
<dbReference type="Pfam" id="PF01327">
    <property type="entry name" value="Pep_deformylase"/>
    <property type="match status" value="1"/>
</dbReference>
<dbReference type="PIRSF" id="PIRSF004749">
    <property type="entry name" value="Pep_def"/>
    <property type="match status" value="1"/>
</dbReference>
<dbReference type="PRINTS" id="PR01576">
    <property type="entry name" value="PDEFORMYLASE"/>
</dbReference>
<dbReference type="SUPFAM" id="SSF56420">
    <property type="entry name" value="Peptide deformylase"/>
    <property type="match status" value="1"/>
</dbReference>
<name>DEF_SHIDS</name>
<reference key="1">
    <citation type="journal article" date="2005" name="Nucleic Acids Res.">
        <title>Genome dynamics and diversity of Shigella species, the etiologic agents of bacillary dysentery.</title>
        <authorList>
            <person name="Yang F."/>
            <person name="Yang J."/>
            <person name="Zhang X."/>
            <person name="Chen L."/>
            <person name="Jiang Y."/>
            <person name="Yan Y."/>
            <person name="Tang X."/>
            <person name="Wang J."/>
            <person name="Xiong Z."/>
            <person name="Dong J."/>
            <person name="Xue Y."/>
            <person name="Zhu Y."/>
            <person name="Xu X."/>
            <person name="Sun L."/>
            <person name="Chen S."/>
            <person name="Nie H."/>
            <person name="Peng J."/>
            <person name="Xu J."/>
            <person name="Wang Y."/>
            <person name="Yuan Z."/>
            <person name="Wen Y."/>
            <person name="Yao Z."/>
            <person name="Shen Y."/>
            <person name="Qiang B."/>
            <person name="Hou Y."/>
            <person name="Yu J."/>
            <person name="Jin Q."/>
        </authorList>
    </citation>
    <scope>NUCLEOTIDE SEQUENCE [LARGE SCALE GENOMIC DNA]</scope>
    <source>
        <strain>Sd197</strain>
    </source>
</reference>
<feature type="chain" id="PRO_0000301097" description="Peptide deformylase">
    <location>
        <begin position="1"/>
        <end position="169"/>
    </location>
</feature>
<feature type="active site" evidence="1">
    <location>
        <position position="134"/>
    </location>
</feature>
<feature type="binding site" evidence="1">
    <location>
        <position position="91"/>
    </location>
    <ligand>
        <name>Fe cation</name>
        <dbReference type="ChEBI" id="CHEBI:24875"/>
    </ligand>
</feature>
<feature type="binding site" evidence="1">
    <location>
        <position position="133"/>
    </location>
    <ligand>
        <name>Fe cation</name>
        <dbReference type="ChEBI" id="CHEBI:24875"/>
    </ligand>
</feature>
<feature type="binding site" evidence="1">
    <location>
        <position position="137"/>
    </location>
    <ligand>
        <name>Fe cation</name>
        <dbReference type="ChEBI" id="CHEBI:24875"/>
    </ligand>
</feature>
<keyword id="KW-0378">Hydrolase</keyword>
<keyword id="KW-0408">Iron</keyword>
<keyword id="KW-0479">Metal-binding</keyword>
<keyword id="KW-0648">Protein biosynthesis</keyword>
<keyword id="KW-1185">Reference proteome</keyword>
<protein>
    <recommendedName>
        <fullName evidence="1">Peptide deformylase</fullName>
        <shortName evidence="1">PDF</shortName>
        <ecNumber evidence="1">3.5.1.88</ecNumber>
    </recommendedName>
    <alternativeName>
        <fullName evidence="1">Polypeptide deformylase</fullName>
    </alternativeName>
</protein>
<organism>
    <name type="scientific">Shigella dysenteriae serotype 1 (strain Sd197)</name>
    <dbReference type="NCBI Taxonomy" id="300267"/>
    <lineage>
        <taxon>Bacteria</taxon>
        <taxon>Pseudomonadati</taxon>
        <taxon>Pseudomonadota</taxon>
        <taxon>Gammaproteobacteria</taxon>
        <taxon>Enterobacterales</taxon>
        <taxon>Enterobacteriaceae</taxon>
        <taxon>Shigella</taxon>
    </lineage>
</organism>
<accession>Q32B63</accession>
<evidence type="ECO:0000255" key="1">
    <source>
        <dbReference type="HAMAP-Rule" id="MF_00163"/>
    </source>
</evidence>